<comment type="function">
    <text evidence="1">Involved in the modulation of the specificity of the ClpAP-mediated ATP-dependent protein degradation.</text>
</comment>
<comment type="subunit">
    <text evidence="1">Binds to the N-terminal domain of the chaperone ClpA.</text>
</comment>
<comment type="similarity">
    <text evidence="1">Belongs to the ClpS family.</text>
</comment>
<name>CLPS_PHEZH</name>
<keyword id="KW-1185">Reference proteome</keyword>
<gene>
    <name evidence="1" type="primary">clpS</name>
    <name type="ordered locus">PHZ_c1303</name>
</gene>
<protein>
    <recommendedName>
        <fullName evidence="1">ATP-dependent Clp protease adapter protein ClpS</fullName>
    </recommendedName>
</protein>
<organism>
    <name type="scientific">Phenylobacterium zucineum (strain HLK1)</name>
    <dbReference type="NCBI Taxonomy" id="450851"/>
    <lineage>
        <taxon>Bacteria</taxon>
        <taxon>Pseudomonadati</taxon>
        <taxon>Pseudomonadota</taxon>
        <taxon>Alphaproteobacteria</taxon>
        <taxon>Caulobacterales</taxon>
        <taxon>Caulobacteraceae</taxon>
        <taxon>Phenylobacterium</taxon>
    </lineage>
</organism>
<evidence type="ECO:0000255" key="1">
    <source>
        <dbReference type="HAMAP-Rule" id="MF_00302"/>
    </source>
</evidence>
<evidence type="ECO:0000256" key="2">
    <source>
        <dbReference type="SAM" id="MobiDB-lite"/>
    </source>
</evidence>
<feature type="chain" id="PRO_1000115465" description="ATP-dependent Clp protease adapter protein ClpS">
    <location>
        <begin position="1"/>
        <end position="109"/>
    </location>
</feature>
<feature type="region of interest" description="Disordered" evidence="2">
    <location>
        <begin position="1"/>
        <end position="25"/>
    </location>
</feature>
<accession>B4R947</accession>
<proteinExistence type="inferred from homology"/>
<sequence>MSERKEGDSGAGVRSAVITQTKPKTQKPAMYRVLLLNDDYTPMEFVVYVLEQFFNKSREDATRIMLHVHQHGVGVCGVYTYEVAETKVAQVVDTARRHQHPLQCTMEKD</sequence>
<dbReference type="EMBL" id="CP000747">
    <property type="protein sequence ID" value="ACG77717.1"/>
    <property type="molecule type" value="Genomic_DNA"/>
</dbReference>
<dbReference type="RefSeq" id="WP_012521861.1">
    <property type="nucleotide sequence ID" value="NC_011144.1"/>
</dbReference>
<dbReference type="SMR" id="B4R947"/>
<dbReference type="STRING" id="450851.PHZ_c1303"/>
<dbReference type="KEGG" id="pzu:PHZ_c1303"/>
<dbReference type="eggNOG" id="COG2127">
    <property type="taxonomic scope" value="Bacteria"/>
</dbReference>
<dbReference type="HOGENOM" id="CLU_134358_0_0_5"/>
<dbReference type="OrthoDB" id="9796121at2"/>
<dbReference type="Proteomes" id="UP000001868">
    <property type="component" value="Chromosome"/>
</dbReference>
<dbReference type="GO" id="GO:0030163">
    <property type="term" value="P:protein catabolic process"/>
    <property type="evidence" value="ECO:0007669"/>
    <property type="project" value="InterPro"/>
</dbReference>
<dbReference type="GO" id="GO:0006508">
    <property type="term" value="P:proteolysis"/>
    <property type="evidence" value="ECO:0007669"/>
    <property type="project" value="UniProtKB-UniRule"/>
</dbReference>
<dbReference type="FunFam" id="3.30.1390.10:FF:000002">
    <property type="entry name" value="ATP-dependent Clp protease adapter protein ClpS"/>
    <property type="match status" value="1"/>
</dbReference>
<dbReference type="Gene3D" id="3.30.1390.10">
    <property type="match status" value="1"/>
</dbReference>
<dbReference type="HAMAP" id="MF_00302">
    <property type="entry name" value="ClpS"/>
    <property type="match status" value="1"/>
</dbReference>
<dbReference type="InterPro" id="IPR022935">
    <property type="entry name" value="ClpS"/>
</dbReference>
<dbReference type="InterPro" id="IPR003769">
    <property type="entry name" value="ClpS_core"/>
</dbReference>
<dbReference type="InterPro" id="IPR014719">
    <property type="entry name" value="Ribosomal_bL12_C/ClpS-like"/>
</dbReference>
<dbReference type="NCBIfam" id="NF000669">
    <property type="entry name" value="PRK00033.1-2"/>
    <property type="match status" value="1"/>
</dbReference>
<dbReference type="NCBIfam" id="NF000672">
    <property type="entry name" value="PRK00033.1-5"/>
    <property type="match status" value="1"/>
</dbReference>
<dbReference type="PANTHER" id="PTHR33473:SF19">
    <property type="entry name" value="ATP-DEPENDENT CLP PROTEASE ADAPTER PROTEIN CLPS"/>
    <property type="match status" value="1"/>
</dbReference>
<dbReference type="PANTHER" id="PTHR33473">
    <property type="entry name" value="ATP-DEPENDENT CLP PROTEASE ADAPTER PROTEIN CLPS1, CHLOROPLASTIC"/>
    <property type="match status" value="1"/>
</dbReference>
<dbReference type="Pfam" id="PF02617">
    <property type="entry name" value="ClpS"/>
    <property type="match status" value="1"/>
</dbReference>
<dbReference type="SUPFAM" id="SSF54736">
    <property type="entry name" value="ClpS-like"/>
    <property type="match status" value="1"/>
</dbReference>
<reference key="1">
    <citation type="journal article" date="2008" name="BMC Genomics">
        <title>Complete genome of Phenylobacterium zucineum - a novel facultative intracellular bacterium isolated from human erythroleukemia cell line K562.</title>
        <authorList>
            <person name="Luo Y."/>
            <person name="Xu X."/>
            <person name="Ding Z."/>
            <person name="Liu Z."/>
            <person name="Zhang B."/>
            <person name="Yan Z."/>
            <person name="Sun J."/>
            <person name="Hu S."/>
            <person name="Hu X."/>
        </authorList>
    </citation>
    <scope>NUCLEOTIDE SEQUENCE [LARGE SCALE GENOMIC DNA]</scope>
    <source>
        <strain>HLK1</strain>
    </source>
</reference>